<dbReference type="EC" id="7.6.2.8" evidence="1"/>
<dbReference type="EMBL" id="AM286415">
    <property type="protein sequence ID" value="CAL12263.1"/>
    <property type="molecule type" value="Genomic_DNA"/>
</dbReference>
<dbReference type="RefSeq" id="YP_001006433.1">
    <property type="nucleotide sequence ID" value="NC_008800.1"/>
</dbReference>
<dbReference type="SMR" id="A1JPQ1"/>
<dbReference type="KEGG" id="yen:YE2193"/>
<dbReference type="PATRIC" id="fig|393305.7.peg.2358"/>
<dbReference type="eggNOG" id="COG4138">
    <property type="taxonomic scope" value="Bacteria"/>
</dbReference>
<dbReference type="HOGENOM" id="CLU_000604_1_11_6"/>
<dbReference type="OrthoDB" id="5292475at2"/>
<dbReference type="Proteomes" id="UP000000642">
    <property type="component" value="Chromosome"/>
</dbReference>
<dbReference type="GO" id="GO:0005886">
    <property type="term" value="C:plasma membrane"/>
    <property type="evidence" value="ECO:0007669"/>
    <property type="project" value="UniProtKB-SubCell"/>
</dbReference>
<dbReference type="GO" id="GO:0015420">
    <property type="term" value="F:ABC-type vitamin B12 transporter activity"/>
    <property type="evidence" value="ECO:0007669"/>
    <property type="project" value="UniProtKB-UniRule"/>
</dbReference>
<dbReference type="GO" id="GO:0005524">
    <property type="term" value="F:ATP binding"/>
    <property type="evidence" value="ECO:0007669"/>
    <property type="project" value="UniProtKB-KW"/>
</dbReference>
<dbReference type="GO" id="GO:0016887">
    <property type="term" value="F:ATP hydrolysis activity"/>
    <property type="evidence" value="ECO:0007669"/>
    <property type="project" value="InterPro"/>
</dbReference>
<dbReference type="CDD" id="cd03214">
    <property type="entry name" value="ABC_Iron-Siderophores_B12_Hemin"/>
    <property type="match status" value="1"/>
</dbReference>
<dbReference type="FunFam" id="3.40.50.300:FF:000462">
    <property type="entry name" value="Vitamin B12 import ATP-binding protein BtuD"/>
    <property type="match status" value="1"/>
</dbReference>
<dbReference type="Gene3D" id="3.40.50.300">
    <property type="entry name" value="P-loop containing nucleotide triphosphate hydrolases"/>
    <property type="match status" value="1"/>
</dbReference>
<dbReference type="HAMAP" id="MF_01005">
    <property type="entry name" value="BtuD"/>
    <property type="match status" value="1"/>
</dbReference>
<dbReference type="InterPro" id="IPR003593">
    <property type="entry name" value="AAA+_ATPase"/>
</dbReference>
<dbReference type="InterPro" id="IPR003439">
    <property type="entry name" value="ABC_transporter-like_ATP-bd"/>
</dbReference>
<dbReference type="InterPro" id="IPR017871">
    <property type="entry name" value="ABC_transporter-like_CS"/>
</dbReference>
<dbReference type="InterPro" id="IPR023693">
    <property type="entry name" value="ABC_transptr_BtuD"/>
</dbReference>
<dbReference type="InterPro" id="IPR050153">
    <property type="entry name" value="Metal_Ion_Import_ABC"/>
</dbReference>
<dbReference type="InterPro" id="IPR027417">
    <property type="entry name" value="P-loop_NTPase"/>
</dbReference>
<dbReference type="NCBIfam" id="NF002981">
    <property type="entry name" value="PRK03695.1"/>
    <property type="match status" value="1"/>
</dbReference>
<dbReference type="PANTHER" id="PTHR42734">
    <property type="entry name" value="METAL TRANSPORT SYSTEM ATP-BINDING PROTEIN TM_0124-RELATED"/>
    <property type="match status" value="1"/>
</dbReference>
<dbReference type="PANTHER" id="PTHR42734:SF18">
    <property type="entry name" value="VITAMIN B12 IMPORT ATP-BINDING PROTEIN BTUD"/>
    <property type="match status" value="1"/>
</dbReference>
<dbReference type="Pfam" id="PF00005">
    <property type="entry name" value="ABC_tran"/>
    <property type="match status" value="1"/>
</dbReference>
<dbReference type="SMART" id="SM00382">
    <property type="entry name" value="AAA"/>
    <property type="match status" value="1"/>
</dbReference>
<dbReference type="SUPFAM" id="SSF52540">
    <property type="entry name" value="P-loop containing nucleoside triphosphate hydrolases"/>
    <property type="match status" value="1"/>
</dbReference>
<dbReference type="PROSITE" id="PS00211">
    <property type="entry name" value="ABC_TRANSPORTER_1"/>
    <property type="match status" value="1"/>
</dbReference>
<dbReference type="PROSITE" id="PS50893">
    <property type="entry name" value="ABC_TRANSPORTER_2"/>
    <property type="match status" value="1"/>
</dbReference>
<organism>
    <name type="scientific">Yersinia enterocolitica serotype O:8 / biotype 1B (strain NCTC 13174 / 8081)</name>
    <dbReference type="NCBI Taxonomy" id="393305"/>
    <lineage>
        <taxon>Bacteria</taxon>
        <taxon>Pseudomonadati</taxon>
        <taxon>Pseudomonadota</taxon>
        <taxon>Gammaproteobacteria</taxon>
        <taxon>Enterobacterales</taxon>
        <taxon>Yersiniaceae</taxon>
        <taxon>Yersinia</taxon>
    </lineage>
</organism>
<comment type="function">
    <text evidence="1">Part of the ABC transporter complex BtuCDF involved in vitamin B12 import. Responsible for energy coupling to the transport system.</text>
</comment>
<comment type="catalytic activity">
    <reaction evidence="1">
        <text>an R-cob(III)alamin(out) + ATP + H2O = an R-cob(III)alamin(in) + ADP + phosphate + H(+)</text>
        <dbReference type="Rhea" id="RHEA:17873"/>
        <dbReference type="ChEBI" id="CHEBI:15377"/>
        <dbReference type="ChEBI" id="CHEBI:15378"/>
        <dbReference type="ChEBI" id="CHEBI:30616"/>
        <dbReference type="ChEBI" id="CHEBI:43474"/>
        <dbReference type="ChEBI" id="CHEBI:140785"/>
        <dbReference type="ChEBI" id="CHEBI:456216"/>
        <dbReference type="EC" id="7.6.2.8"/>
    </reaction>
</comment>
<comment type="subunit">
    <text evidence="1">The complex is composed of two ATP-binding proteins (BtuD), two transmembrane proteins (BtuC) and a solute-binding protein (BtuF).</text>
</comment>
<comment type="subcellular location">
    <subcellularLocation>
        <location evidence="1">Cell inner membrane</location>
        <topology evidence="1">Peripheral membrane protein</topology>
    </subcellularLocation>
</comment>
<comment type="similarity">
    <text evidence="1">Belongs to the ABC transporter superfamily. Vitamin B12 importer (TC 3.A.1.13.1) family.</text>
</comment>
<accession>A1JPQ1</accession>
<name>BTUD_YERE8</name>
<evidence type="ECO:0000255" key="1">
    <source>
        <dbReference type="HAMAP-Rule" id="MF_01005"/>
    </source>
</evidence>
<keyword id="KW-0067">ATP-binding</keyword>
<keyword id="KW-0997">Cell inner membrane</keyword>
<keyword id="KW-1003">Cell membrane</keyword>
<keyword id="KW-0472">Membrane</keyword>
<keyword id="KW-0547">Nucleotide-binding</keyword>
<keyword id="KW-1278">Translocase</keyword>
<keyword id="KW-0813">Transport</keyword>
<feature type="chain" id="PRO_1000083971" description="Vitamin B12 import ATP-binding protein BtuD">
    <location>
        <begin position="1"/>
        <end position="253"/>
    </location>
</feature>
<feature type="domain" description="ABC transporter" evidence="1">
    <location>
        <begin position="4"/>
        <end position="236"/>
    </location>
</feature>
<feature type="binding site" evidence="1">
    <location>
        <begin position="32"/>
        <end position="39"/>
    </location>
    <ligand>
        <name>ATP</name>
        <dbReference type="ChEBI" id="CHEBI:30616"/>
    </ligand>
</feature>
<gene>
    <name evidence="1" type="primary">btuD</name>
    <name type="ordered locus">YE2193</name>
</gene>
<sequence>MMLLQLSNVSVDTRLAPFSTQVAAGLQTHLIGPNGAGKSTLLASLAGLLPSGGDISLAGKALSLYSGPDLARLRAYLCQQQSALTMMPVFQYLSLYQPAGASLDAIATTIGYLCERLRLTDKLPRMLSQLSGGEWQRVRLAAVFLQVWPDINPDSKLLLLDEPYTGLDVAQKVALDSLLREFCSAGRSAIISAHDLNHTLQQADQVWLMSGGNVLAQGSTDKVMRANILSEVFEVDFQIHNFNRQNWIITKDF</sequence>
<protein>
    <recommendedName>
        <fullName evidence="1">Vitamin B12 import ATP-binding protein BtuD</fullName>
        <ecNumber evidence="1">7.6.2.8</ecNumber>
    </recommendedName>
    <alternativeName>
        <fullName evidence="1">Vitamin B12-transporting ATPase</fullName>
    </alternativeName>
</protein>
<proteinExistence type="inferred from homology"/>
<reference key="1">
    <citation type="journal article" date="2006" name="PLoS Genet.">
        <title>The complete genome sequence and comparative genome analysis of the high pathogenicity Yersinia enterocolitica strain 8081.</title>
        <authorList>
            <person name="Thomson N.R."/>
            <person name="Howard S."/>
            <person name="Wren B.W."/>
            <person name="Holden M.T.G."/>
            <person name="Crossman L."/>
            <person name="Challis G.L."/>
            <person name="Churcher C."/>
            <person name="Mungall K."/>
            <person name="Brooks K."/>
            <person name="Chillingworth T."/>
            <person name="Feltwell T."/>
            <person name="Abdellah Z."/>
            <person name="Hauser H."/>
            <person name="Jagels K."/>
            <person name="Maddison M."/>
            <person name="Moule S."/>
            <person name="Sanders M."/>
            <person name="Whitehead S."/>
            <person name="Quail M.A."/>
            <person name="Dougan G."/>
            <person name="Parkhill J."/>
            <person name="Prentice M.B."/>
        </authorList>
    </citation>
    <scope>NUCLEOTIDE SEQUENCE [LARGE SCALE GENOMIC DNA]</scope>
    <source>
        <strain>NCTC 13174 / 8081</strain>
    </source>
</reference>